<keyword id="KW-1185">Reference proteome</keyword>
<keyword id="KW-0687">Ribonucleoprotein</keyword>
<keyword id="KW-0689">Ribosomal protein</keyword>
<evidence type="ECO:0000255" key="1">
    <source>
        <dbReference type="HAMAP-Rule" id="MF_00514"/>
    </source>
</evidence>
<evidence type="ECO:0000305" key="2"/>
<protein>
    <recommendedName>
        <fullName evidence="1">Large ribosomal subunit protein bL35</fullName>
    </recommendedName>
    <alternativeName>
        <fullName evidence="2">50S ribosomal protein L35</fullName>
    </alternativeName>
</protein>
<name>RL35_CAMJE</name>
<sequence>MPKMKSVKSAVKRFKVGKNKIKRGSAFRSHILTKKPAKRMRGLRTAKYVHSTNVKAVEKMLGI</sequence>
<accession>Q9PIQ1</accession>
<accession>Q0PBR1</accession>
<organism>
    <name type="scientific">Campylobacter jejuni subsp. jejuni serotype O:2 (strain ATCC 700819 / NCTC 11168)</name>
    <dbReference type="NCBI Taxonomy" id="192222"/>
    <lineage>
        <taxon>Bacteria</taxon>
        <taxon>Pseudomonadati</taxon>
        <taxon>Campylobacterota</taxon>
        <taxon>Epsilonproteobacteria</taxon>
        <taxon>Campylobacterales</taxon>
        <taxon>Campylobacteraceae</taxon>
        <taxon>Campylobacter</taxon>
    </lineage>
</organism>
<comment type="similarity">
    <text evidence="1">Belongs to the bacterial ribosomal protein bL35 family.</text>
</comment>
<proteinExistence type="inferred from homology"/>
<dbReference type="EMBL" id="AL111168">
    <property type="protein sequence ID" value="CAL34398.1"/>
    <property type="molecule type" value="Genomic_DNA"/>
</dbReference>
<dbReference type="PIR" id="C81442">
    <property type="entry name" value="C81442"/>
</dbReference>
<dbReference type="RefSeq" id="WP_002851822.1">
    <property type="nucleotide sequence ID" value="NZ_SZUC01000006.1"/>
</dbReference>
<dbReference type="RefSeq" id="YP_002343686.1">
    <property type="nucleotide sequence ID" value="NC_002163.1"/>
</dbReference>
<dbReference type="SMR" id="Q9PIQ1"/>
<dbReference type="IntAct" id="Q9PIQ1">
    <property type="interactions" value="12"/>
</dbReference>
<dbReference type="STRING" id="192222.Cj0244"/>
<dbReference type="PaxDb" id="192222-Cj0244"/>
<dbReference type="EnsemblBacteria" id="CAL34398">
    <property type="protein sequence ID" value="CAL34398"/>
    <property type="gene ID" value="Cj0244"/>
</dbReference>
<dbReference type="GeneID" id="904570"/>
<dbReference type="KEGG" id="cje:Cj0244"/>
<dbReference type="PATRIC" id="fig|192222.6.peg.238"/>
<dbReference type="eggNOG" id="COG0291">
    <property type="taxonomic scope" value="Bacteria"/>
</dbReference>
<dbReference type="HOGENOM" id="CLU_169643_1_2_7"/>
<dbReference type="OrthoDB" id="9804851at2"/>
<dbReference type="Proteomes" id="UP000000799">
    <property type="component" value="Chromosome"/>
</dbReference>
<dbReference type="GO" id="GO:0022625">
    <property type="term" value="C:cytosolic large ribosomal subunit"/>
    <property type="evidence" value="ECO:0007669"/>
    <property type="project" value="TreeGrafter"/>
</dbReference>
<dbReference type="GO" id="GO:0003735">
    <property type="term" value="F:structural constituent of ribosome"/>
    <property type="evidence" value="ECO:0007669"/>
    <property type="project" value="InterPro"/>
</dbReference>
<dbReference type="GO" id="GO:0006412">
    <property type="term" value="P:translation"/>
    <property type="evidence" value="ECO:0007669"/>
    <property type="project" value="UniProtKB-UniRule"/>
</dbReference>
<dbReference type="FunFam" id="4.10.410.60:FF:000001">
    <property type="entry name" value="50S ribosomal protein L35"/>
    <property type="match status" value="1"/>
</dbReference>
<dbReference type="Gene3D" id="4.10.410.60">
    <property type="match status" value="1"/>
</dbReference>
<dbReference type="HAMAP" id="MF_00514">
    <property type="entry name" value="Ribosomal_bL35"/>
    <property type="match status" value="1"/>
</dbReference>
<dbReference type="InterPro" id="IPR001706">
    <property type="entry name" value="Ribosomal_bL35"/>
</dbReference>
<dbReference type="InterPro" id="IPR021137">
    <property type="entry name" value="Ribosomal_bL35-like"/>
</dbReference>
<dbReference type="InterPro" id="IPR018265">
    <property type="entry name" value="Ribosomal_bL35_CS"/>
</dbReference>
<dbReference type="InterPro" id="IPR037229">
    <property type="entry name" value="Ribosomal_bL35_sf"/>
</dbReference>
<dbReference type="NCBIfam" id="TIGR00001">
    <property type="entry name" value="rpmI_bact"/>
    <property type="match status" value="1"/>
</dbReference>
<dbReference type="PANTHER" id="PTHR33343">
    <property type="entry name" value="54S RIBOSOMAL PROTEIN BL35M"/>
    <property type="match status" value="1"/>
</dbReference>
<dbReference type="PANTHER" id="PTHR33343:SF1">
    <property type="entry name" value="LARGE RIBOSOMAL SUBUNIT PROTEIN BL35M"/>
    <property type="match status" value="1"/>
</dbReference>
<dbReference type="Pfam" id="PF01632">
    <property type="entry name" value="Ribosomal_L35p"/>
    <property type="match status" value="1"/>
</dbReference>
<dbReference type="PRINTS" id="PR00064">
    <property type="entry name" value="RIBOSOMALL35"/>
</dbReference>
<dbReference type="SUPFAM" id="SSF143034">
    <property type="entry name" value="L35p-like"/>
    <property type="match status" value="1"/>
</dbReference>
<dbReference type="PROSITE" id="PS00936">
    <property type="entry name" value="RIBOSOMAL_L35"/>
    <property type="match status" value="1"/>
</dbReference>
<gene>
    <name evidence="1" type="primary">rpmI</name>
    <name type="ordered locus">Cj0244</name>
</gene>
<reference key="1">
    <citation type="journal article" date="2000" name="Nature">
        <title>The genome sequence of the food-borne pathogen Campylobacter jejuni reveals hypervariable sequences.</title>
        <authorList>
            <person name="Parkhill J."/>
            <person name="Wren B.W."/>
            <person name="Mungall K.L."/>
            <person name="Ketley J.M."/>
            <person name="Churcher C.M."/>
            <person name="Basham D."/>
            <person name="Chillingworth T."/>
            <person name="Davies R.M."/>
            <person name="Feltwell T."/>
            <person name="Holroyd S."/>
            <person name="Jagels K."/>
            <person name="Karlyshev A.V."/>
            <person name="Moule S."/>
            <person name="Pallen M.J."/>
            <person name="Penn C.W."/>
            <person name="Quail M.A."/>
            <person name="Rajandream M.A."/>
            <person name="Rutherford K.M."/>
            <person name="van Vliet A.H.M."/>
            <person name="Whitehead S."/>
            <person name="Barrell B.G."/>
        </authorList>
    </citation>
    <scope>NUCLEOTIDE SEQUENCE [LARGE SCALE GENOMIC DNA]</scope>
    <source>
        <strain>ATCC 700819 / NCTC 11168</strain>
    </source>
</reference>
<feature type="chain" id="PRO_0000177342" description="Large ribosomal subunit protein bL35">
    <location>
        <begin position="1"/>
        <end position="63"/>
    </location>
</feature>